<comment type="function">
    <text evidence="1 4">Catalyzes the demethylation of isoprenylcysteine methylesters (By similarity). May act as a negative regulator of ABA signaling (PubMed:20868530).</text>
</comment>
<comment type="catalytic activity">
    <reaction evidence="1">
        <text>[protein]-C-terminal S-[(2E,6E)-farnesyl]-L-cysteine methyl ester + H2O = [protein]-C-terminal S-[(2E,6E)-farnesyl]-L-cysteine + methanol + H(+)</text>
        <dbReference type="Rhea" id="RHEA:48520"/>
        <dbReference type="Rhea" id="RHEA-COMP:12125"/>
        <dbReference type="Rhea" id="RHEA-COMP:12126"/>
        <dbReference type="ChEBI" id="CHEBI:15377"/>
        <dbReference type="ChEBI" id="CHEBI:15378"/>
        <dbReference type="ChEBI" id="CHEBI:17790"/>
        <dbReference type="ChEBI" id="CHEBI:90510"/>
        <dbReference type="ChEBI" id="CHEBI:90511"/>
        <dbReference type="EC" id="3.1.1.n2"/>
    </reaction>
</comment>
<comment type="subcellular location">
    <subcellularLocation>
        <location evidence="4">Endoplasmic reticulum membrane</location>
    </subcellularLocation>
    <subcellularLocation>
        <location evidence="4">Golgi apparatus membrane</location>
        <topology evidence="4">Multi-pass membrane protein</topology>
    </subcellularLocation>
</comment>
<comment type="alternative products">
    <event type="alternative splicing"/>
    <isoform>
        <id>Q1PET6-1</id>
        <name>1</name>
        <sequence type="displayed"/>
    </isoform>
    <isoform>
        <id>Q1PET6-2</id>
        <name>2</name>
        <sequence type="described" ref="VSP_041625 VSP_041626"/>
    </isoform>
</comment>
<comment type="tissue specificity">
    <text evidence="4">Expressed at low levels in flowers and siliques.</text>
</comment>
<comment type="disruption phenotype">
    <text evidence="4">Increased sensitivity to abscissic acid (ABA) but slightly decreased sensitivity to salt and osmotic stresses during seed germination.</text>
</comment>
<comment type="miscellaneous">
    <text evidence="4">Plants silencing ICMEL2 show enhanced ABA inhibition of seed germination.</text>
</comment>
<comment type="similarity">
    <text evidence="6">Belongs to the AB hydrolase superfamily. Isoprenylcysteine methylesterase family.</text>
</comment>
<comment type="sequence caution" evidence="6">
    <conflict type="erroneous gene model prediction">
        <sequence resource="EMBL-CDS" id="AAF32448"/>
    </conflict>
</comment>
<comment type="sequence caution" evidence="6">
    <conflict type="erroneous termination">
        <sequence resource="EMBL-CDS" id="ABK28542"/>
    </conflict>
    <text>Extended C-terminus.</text>
</comment>
<keyword id="KW-0025">Alternative splicing</keyword>
<keyword id="KW-0256">Endoplasmic reticulum</keyword>
<keyword id="KW-0333">Golgi apparatus</keyword>
<keyword id="KW-0378">Hydrolase</keyword>
<keyword id="KW-0472">Membrane</keyword>
<keyword id="KW-1185">Reference proteome</keyword>
<keyword id="KW-0812">Transmembrane</keyword>
<keyword id="KW-1133">Transmembrane helix</keyword>
<sequence>MQLSPERCRPMSENREAWSANSEEMELLHGSNRLSSPEHVRRRVSGNSSEDGSPRICRQQSFGRDIGHAAAETYLITRLSFNLLGYLGVGYRWITRLLALACYAMLLMPGFLQVAYLYFFSSQVRRSIVYGGHPRNRLDLYIPPTSDGLKPVVVFVTGGAWIIGYKAWGSLLGLQLAERDIIVACLDYRNFPQGTISDMVSDAAQGISFVCNNISAFGGDPNRIYLMGQSAGAHISSCALFEQAIKESRGESISWSVSQIKAYFGLSGGYNLFNLVEHFHNRGLYRSIFLSIMEGEESFKQFSPEVRLKDLNVRKAAALLPHIILFHGSADYSIPPEASKTFTDALQAAEVKAELVMYKGKTHTDLFLQDPLRGGKDELFDHIVSMIHADDSDALRNDAVAPPRKRLVPEFLLKLAGRVSPF</sequence>
<name>ICML2_ARATH</name>
<proteinExistence type="evidence at transcript level"/>
<organism>
    <name type="scientific">Arabidopsis thaliana</name>
    <name type="common">Mouse-ear cress</name>
    <dbReference type="NCBI Taxonomy" id="3702"/>
    <lineage>
        <taxon>Eukaryota</taxon>
        <taxon>Viridiplantae</taxon>
        <taxon>Streptophyta</taxon>
        <taxon>Embryophyta</taxon>
        <taxon>Tracheophyta</taxon>
        <taxon>Spermatophyta</taxon>
        <taxon>Magnoliopsida</taxon>
        <taxon>eudicotyledons</taxon>
        <taxon>Gunneridae</taxon>
        <taxon>Pentapetalae</taxon>
        <taxon>rosids</taxon>
        <taxon>malvids</taxon>
        <taxon>Brassicales</taxon>
        <taxon>Brassicaceae</taxon>
        <taxon>Camelineae</taxon>
        <taxon>Arabidopsis</taxon>
    </lineage>
</organism>
<dbReference type="EC" id="3.1.1.n2" evidence="1"/>
<dbReference type="EMBL" id="AC021640">
    <property type="protein sequence ID" value="AAF32448.1"/>
    <property type="status" value="ALT_SEQ"/>
    <property type="molecule type" value="Genomic_DNA"/>
</dbReference>
<dbReference type="EMBL" id="CP002686">
    <property type="protein sequence ID" value="AEE73804.1"/>
    <property type="molecule type" value="Genomic_DNA"/>
</dbReference>
<dbReference type="EMBL" id="CP002686">
    <property type="protein sequence ID" value="AEE73805.1"/>
    <property type="molecule type" value="Genomic_DNA"/>
</dbReference>
<dbReference type="EMBL" id="DQ446631">
    <property type="protein sequence ID" value="ABE65914.1"/>
    <property type="molecule type" value="mRNA"/>
</dbReference>
<dbReference type="EMBL" id="DQ653064">
    <property type="protein sequence ID" value="ABK28542.1"/>
    <property type="status" value="ALT_SEQ"/>
    <property type="molecule type" value="mRNA"/>
</dbReference>
<dbReference type="RefSeq" id="NP_001118556.1">
    <molecule id="Q1PET6-2"/>
    <property type="nucleotide sequence ID" value="NM_001125084.1"/>
</dbReference>
<dbReference type="RefSeq" id="NP_186890.2">
    <molecule id="Q1PET6-1"/>
    <property type="nucleotide sequence ID" value="NM_111108.4"/>
</dbReference>
<dbReference type="SMR" id="Q1PET6"/>
<dbReference type="BioGRID" id="6524">
    <property type="interactions" value="23"/>
</dbReference>
<dbReference type="FunCoup" id="Q1PET6">
    <property type="interactions" value="190"/>
</dbReference>
<dbReference type="IntAct" id="Q1PET6">
    <property type="interactions" value="23"/>
</dbReference>
<dbReference type="STRING" id="3702.Q1PET6"/>
<dbReference type="ESTHER" id="arath-F16B3.4">
    <property type="family name" value="BD-FAE"/>
</dbReference>
<dbReference type="MEROPS" id="S09.A62"/>
<dbReference type="PaxDb" id="3702-AT3G02410.1"/>
<dbReference type="ProteomicsDB" id="228763">
    <molecule id="Q1PET6-1"/>
</dbReference>
<dbReference type="EnsemblPlants" id="AT3G02410.1">
    <molecule id="Q1PET6-1"/>
    <property type="protein sequence ID" value="AT3G02410.1"/>
    <property type="gene ID" value="AT3G02410"/>
</dbReference>
<dbReference type="EnsemblPlants" id="AT3G02410.2">
    <molecule id="Q1PET6-2"/>
    <property type="protein sequence ID" value="AT3G02410.2"/>
    <property type="gene ID" value="AT3G02410"/>
</dbReference>
<dbReference type="GeneID" id="821191"/>
<dbReference type="Gramene" id="AT3G02410.1">
    <molecule id="Q1PET6-1"/>
    <property type="protein sequence ID" value="AT3G02410.1"/>
    <property type="gene ID" value="AT3G02410"/>
</dbReference>
<dbReference type="Gramene" id="AT3G02410.2">
    <molecule id="Q1PET6-2"/>
    <property type="protein sequence ID" value="AT3G02410.2"/>
    <property type="gene ID" value="AT3G02410"/>
</dbReference>
<dbReference type="KEGG" id="ath:AT3G02410"/>
<dbReference type="Araport" id="AT3G02410"/>
<dbReference type="TAIR" id="AT3G02410">
    <property type="gene designation" value="ICME-LIKE2"/>
</dbReference>
<dbReference type="eggNOG" id="KOG1516">
    <property type="taxonomic scope" value="Eukaryota"/>
</dbReference>
<dbReference type="InParanoid" id="Q1PET6"/>
<dbReference type="OMA" id="WDASHEA"/>
<dbReference type="OrthoDB" id="6495301at2759"/>
<dbReference type="PhylomeDB" id="Q1PET6"/>
<dbReference type="PRO" id="PR:Q1PET6"/>
<dbReference type="Proteomes" id="UP000006548">
    <property type="component" value="Chromosome 3"/>
</dbReference>
<dbReference type="ExpressionAtlas" id="Q1PET6">
    <property type="expression patterns" value="baseline and differential"/>
</dbReference>
<dbReference type="GO" id="GO:0005789">
    <property type="term" value="C:endoplasmic reticulum membrane"/>
    <property type="evidence" value="ECO:0000314"/>
    <property type="project" value="UniProtKB"/>
</dbReference>
<dbReference type="GO" id="GO:0000139">
    <property type="term" value="C:Golgi membrane"/>
    <property type="evidence" value="ECO:0000314"/>
    <property type="project" value="UniProtKB"/>
</dbReference>
<dbReference type="GO" id="GO:0010296">
    <property type="term" value="F:prenylcysteine methylesterase activity"/>
    <property type="evidence" value="ECO:0007669"/>
    <property type="project" value="RHEA"/>
</dbReference>
<dbReference type="GO" id="GO:0009737">
    <property type="term" value="P:response to abscisic acid"/>
    <property type="evidence" value="ECO:0000315"/>
    <property type="project" value="UniProtKB"/>
</dbReference>
<dbReference type="FunFam" id="3.40.50.1820:FF:000084">
    <property type="entry name" value="Isoprenylcysteine alpha-carbonyl methylesterase ICME"/>
    <property type="match status" value="1"/>
</dbReference>
<dbReference type="Gene3D" id="3.40.50.1820">
    <property type="entry name" value="alpha/beta hydrolase"/>
    <property type="match status" value="1"/>
</dbReference>
<dbReference type="InterPro" id="IPR029058">
    <property type="entry name" value="AB_hydrolase_fold"/>
</dbReference>
<dbReference type="InterPro" id="IPR049492">
    <property type="entry name" value="BD-FAE-like_dom"/>
</dbReference>
<dbReference type="InterPro" id="IPR019826">
    <property type="entry name" value="Carboxylesterase_B_AS"/>
</dbReference>
<dbReference type="InterPro" id="IPR050300">
    <property type="entry name" value="GDXG_lipolytic_enzyme"/>
</dbReference>
<dbReference type="PANTHER" id="PTHR48081">
    <property type="entry name" value="AB HYDROLASE SUPERFAMILY PROTEIN C4A8.06C"/>
    <property type="match status" value="1"/>
</dbReference>
<dbReference type="PANTHER" id="PTHR48081:SF33">
    <property type="entry name" value="KYNURENINE FORMAMIDASE"/>
    <property type="match status" value="1"/>
</dbReference>
<dbReference type="Pfam" id="PF20434">
    <property type="entry name" value="BD-FAE"/>
    <property type="match status" value="1"/>
</dbReference>
<dbReference type="SUPFAM" id="SSF53474">
    <property type="entry name" value="alpha/beta-Hydrolases"/>
    <property type="match status" value="1"/>
</dbReference>
<accession>Q1PET6</accession>
<accession>A0MEU1</accession>
<accession>B3H6W3</accession>
<accession>Q9M899</accession>
<reference key="1">
    <citation type="journal article" date="2000" name="Nature">
        <title>Sequence and analysis of chromosome 3 of the plant Arabidopsis thaliana.</title>
        <authorList>
            <person name="Salanoubat M."/>
            <person name="Lemcke K."/>
            <person name="Rieger M."/>
            <person name="Ansorge W."/>
            <person name="Unseld M."/>
            <person name="Fartmann B."/>
            <person name="Valle G."/>
            <person name="Bloecker H."/>
            <person name="Perez-Alonso M."/>
            <person name="Obermaier B."/>
            <person name="Delseny M."/>
            <person name="Boutry M."/>
            <person name="Grivell L.A."/>
            <person name="Mache R."/>
            <person name="Puigdomenech P."/>
            <person name="De Simone V."/>
            <person name="Choisne N."/>
            <person name="Artiguenave F."/>
            <person name="Robert C."/>
            <person name="Brottier P."/>
            <person name="Wincker P."/>
            <person name="Cattolico L."/>
            <person name="Weissenbach J."/>
            <person name="Saurin W."/>
            <person name="Quetier F."/>
            <person name="Schaefer M."/>
            <person name="Mueller-Auer S."/>
            <person name="Gabel C."/>
            <person name="Fuchs M."/>
            <person name="Benes V."/>
            <person name="Wurmbach E."/>
            <person name="Drzonek H."/>
            <person name="Erfle H."/>
            <person name="Jordan N."/>
            <person name="Bangert S."/>
            <person name="Wiedelmann R."/>
            <person name="Kranz H."/>
            <person name="Voss H."/>
            <person name="Holland R."/>
            <person name="Brandt P."/>
            <person name="Nyakatura G."/>
            <person name="Vezzi A."/>
            <person name="D'Angelo M."/>
            <person name="Pallavicini A."/>
            <person name="Toppo S."/>
            <person name="Simionati B."/>
            <person name="Conrad A."/>
            <person name="Hornischer K."/>
            <person name="Kauer G."/>
            <person name="Loehnert T.-H."/>
            <person name="Nordsiek G."/>
            <person name="Reichelt J."/>
            <person name="Scharfe M."/>
            <person name="Schoen O."/>
            <person name="Bargues M."/>
            <person name="Terol J."/>
            <person name="Climent J."/>
            <person name="Navarro P."/>
            <person name="Collado C."/>
            <person name="Perez-Perez A."/>
            <person name="Ottenwaelder B."/>
            <person name="Duchemin D."/>
            <person name="Cooke R."/>
            <person name="Laudie M."/>
            <person name="Berger-Llauro C."/>
            <person name="Purnelle B."/>
            <person name="Masuy D."/>
            <person name="de Haan M."/>
            <person name="Maarse A.C."/>
            <person name="Alcaraz J.-P."/>
            <person name="Cottet A."/>
            <person name="Casacuberta E."/>
            <person name="Monfort A."/>
            <person name="Argiriou A."/>
            <person name="Flores M."/>
            <person name="Liguori R."/>
            <person name="Vitale D."/>
            <person name="Mannhaupt G."/>
            <person name="Haase D."/>
            <person name="Schoof H."/>
            <person name="Rudd S."/>
            <person name="Zaccaria P."/>
            <person name="Mewes H.-W."/>
            <person name="Mayer K.F.X."/>
            <person name="Kaul S."/>
            <person name="Town C.D."/>
            <person name="Koo H.L."/>
            <person name="Tallon L.J."/>
            <person name="Jenkins J."/>
            <person name="Rooney T."/>
            <person name="Rizzo M."/>
            <person name="Walts A."/>
            <person name="Utterback T."/>
            <person name="Fujii C.Y."/>
            <person name="Shea T.P."/>
            <person name="Creasy T.H."/>
            <person name="Haas B."/>
            <person name="Maiti R."/>
            <person name="Wu D."/>
            <person name="Peterson J."/>
            <person name="Van Aken S."/>
            <person name="Pai G."/>
            <person name="Militscher J."/>
            <person name="Sellers P."/>
            <person name="Gill J.E."/>
            <person name="Feldblyum T.V."/>
            <person name="Preuss D."/>
            <person name="Lin X."/>
            <person name="Nierman W.C."/>
            <person name="Salzberg S.L."/>
            <person name="White O."/>
            <person name="Venter J.C."/>
            <person name="Fraser C.M."/>
            <person name="Kaneko T."/>
            <person name="Nakamura Y."/>
            <person name="Sato S."/>
            <person name="Kato T."/>
            <person name="Asamizu E."/>
            <person name="Sasamoto S."/>
            <person name="Kimura T."/>
            <person name="Idesawa K."/>
            <person name="Kawashima K."/>
            <person name="Kishida Y."/>
            <person name="Kiyokawa C."/>
            <person name="Kohara M."/>
            <person name="Matsumoto M."/>
            <person name="Matsuno A."/>
            <person name="Muraki A."/>
            <person name="Nakayama S."/>
            <person name="Nakazaki N."/>
            <person name="Shinpo S."/>
            <person name="Takeuchi C."/>
            <person name="Wada T."/>
            <person name="Watanabe A."/>
            <person name="Yamada M."/>
            <person name="Yasuda M."/>
            <person name="Tabata S."/>
        </authorList>
    </citation>
    <scope>NUCLEOTIDE SEQUENCE [LARGE SCALE GENOMIC DNA]</scope>
    <source>
        <strain>cv. Columbia</strain>
    </source>
</reference>
<reference key="2">
    <citation type="journal article" date="2017" name="Plant J.">
        <title>Araport11: a complete reannotation of the Arabidopsis thaliana reference genome.</title>
        <authorList>
            <person name="Cheng C.Y."/>
            <person name="Krishnakumar V."/>
            <person name="Chan A.P."/>
            <person name="Thibaud-Nissen F."/>
            <person name="Schobel S."/>
            <person name="Town C.D."/>
        </authorList>
    </citation>
    <scope>GENOME REANNOTATION</scope>
    <source>
        <strain>cv. Columbia</strain>
    </source>
</reference>
<reference key="3">
    <citation type="journal article" date="2006" name="Plant Biotechnol. J.">
        <title>Simultaneous high-throughput recombinational cloning of open reading frames in closed and open configurations.</title>
        <authorList>
            <person name="Underwood B.A."/>
            <person name="Vanderhaeghen R."/>
            <person name="Whitford R."/>
            <person name="Town C.D."/>
            <person name="Hilson P."/>
        </authorList>
    </citation>
    <scope>NUCLEOTIDE SEQUENCE [LARGE SCALE MRNA] (ISOFORM 1)</scope>
    <source>
        <strain>cv. Columbia</strain>
    </source>
</reference>
<reference key="4">
    <citation type="journal article" date="2010" name="BMC Plant Biol.">
        <title>Characterization, sub-cellular localization and expression profiling of the isoprenylcysteine methylesterase gene family in Arabidopsis thaliana.</title>
        <authorList>
            <person name="Lan P."/>
            <person name="Li W."/>
            <person name="Wang H."/>
            <person name="Ma W."/>
        </authorList>
    </citation>
    <scope>FUNCTION</scope>
    <scope>DISRUPTION PHENOTYPE</scope>
    <scope>SUBCELLULAR LOCATION</scope>
    <scope>TISSUE SPECIFICITY</scope>
    <source>
        <strain>cv. Columbia</strain>
    </source>
</reference>
<feature type="chain" id="PRO_0000411670" description="Probable isoprenylcysteine alpha-carbonyl methylesterase ICMEL2">
    <location>
        <begin position="1"/>
        <end position="422"/>
    </location>
</feature>
<feature type="transmembrane region" description="Helical" evidence="2">
    <location>
        <begin position="97"/>
        <end position="117"/>
    </location>
</feature>
<feature type="transmembrane region" description="Helical" evidence="2">
    <location>
        <begin position="152"/>
        <end position="172"/>
    </location>
</feature>
<feature type="region of interest" description="Disordered" evidence="3">
    <location>
        <begin position="1"/>
        <end position="55"/>
    </location>
</feature>
<feature type="compositionally biased region" description="Basic and acidic residues" evidence="3">
    <location>
        <begin position="1"/>
        <end position="16"/>
    </location>
</feature>
<feature type="active site" evidence="6">
    <location>
        <position position="230"/>
    </location>
</feature>
<feature type="active site" evidence="6">
    <location>
        <position position="331"/>
    </location>
</feature>
<feature type="active site" evidence="6">
    <location>
        <position position="363"/>
    </location>
</feature>
<feature type="binding site" evidence="2">
    <location>
        <begin position="158"/>
        <end position="160"/>
    </location>
    <ligand>
        <name>substrate</name>
    </ligand>
</feature>
<feature type="binding site" evidence="2">
    <location>
        <begin position="229"/>
        <end position="231"/>
    </location>
    <ligand>
        <name>substrate</name>
    </ligand>
</feature>
<feature type="splice variant" id="VSP_041625" description="In isoform 2." evidence="6">
    <location>
        <begin position="1"/>
        <end position="69"/>
    </location>
</feature>
<feature type="splice variant" id="VSP_041626" description="In isoform 2." evidence="6">
    <original>AAETYLITRLSFNLLGYLGV</original>
    <variation>MQLPRRISLLDLASTFLDIS</variation>
    <location>
        <begin position="70"/>
        <end position="89"/>
    </location>
</feature>
<protein>
    <recommendedName>
        <fullName evidence="5">Probable isoprenylcysteine alpha-carbonyl methylesterase ICMEL2</fullName>
        <ecNumber evidence="1">3.1.1.n2</ecNumber>
    </recommendedName>
    <alternativeName>
        <fullName evidence="5">Isoprenylcysteine methylesterase-like protein 2</fullName>
    </alternativeName>
</protein>
<gene>
    <name evidence="5" type="primary">ICMEL2</name>
    <name evidence="7" type="ordered locus">At3g02410</name>
    <name evidence="8" type="ORF">F16B3.4</name>
</gene>
<evidence type="ECO:0000250" key="1">
    <source>
        <dbReference type="UniProtKB" id="Q94AS5"/>
    </source>
</evidence>
<evidence type="ECO:0000255" key="2"/>
<evidence type="ECO:0000256" key="3">
    <source>
        <dbReference type="SAM" id="MobiDB-lite"/>
    </source>
</evidence>
<evidence type="ECO:0000269" key="4">
    <source>
    </source>
</evidence>
<evidence type="ECO:0000303" key="5">
    <source>
    </source>
</evidence>
<evidence type="ECO:0000305" key="6"/>
<evidence type="ECO:0000312" key="7">
    <source>
        <dbReference type="Araport" id="AT3G02410"/>
    </source>
</evidence>
<evidence type="ECO:0000312" key="8">
    <source>
        <dbReference type="EMBL" id="AAF32448.1"/>
    </source>
</evidence>